<dbReference type="EC" id="6.3.4.2" evidence="1"/>
<dbReference type="EMBL" id="CP000814">
    <property type="protein sequence ID" value="ABV51627.1"/>
    <property type="molecule type" value="Genomic_DNA"/>
</dbReference>
<dbReference type="RefSeq" id="WP_002866785.1">
    <property type="nucleotide sequence ID" value="NC_009839.1"/>
</dbReference>
<dbReference type="SMR" id="A8FJJ0"/>
<dbReference type="KEGG" id="cju:C8J_0026"/>
<dbReference type="HOGENOM" id="CLU_011675_5_0_7"/>
<dbReference type="UniPathway" id="UPA00159">
    <property type="reaction ID" value="UER00277"/>
</dbReference>
<dbReference type="GO" id="GO:0005829">
    <property type="term" value="C:cytosol"/>
    <property type="evidence" value="ECO:0007669"/>
    <property type="project" value="TreeGrafter"/>
</dbReference>
<dbReference type="GO" id="GO:0005524">
    <property type="term" value="F:ATP binding"/>
    <property type="evidence" value="ECO:0007669"/>
    <property type="project" value="UniProtKB-KW"/>
</dbReference>
<dbReference type="GO" id="GO:0003883">
    <property type="term" value="F:CTP synthase activity"/>
    <property type="evidence" value="ECO:0007669"/>
    <property type="project" value="UniProtKB-UniRule"/>
</dbReference>
<dbReference type="GO" id="GO:0004359">
    <property type="term" value="F:glutaminase activity"/>
    <property type="evidence" value="ECO:0007669"/>
    <property type="project" value="RHEA"/>
</dbReference>
<dbReference type="GO" id="GO:0042802">
    <property type="term" value="F:identical protein binding"/>
    <property type="evidence" value="ECO:0007669"/>
    <property type="project" value="TreeGrafter"/>
</dbReference>
<dbReference type="GO" id="GO:0046872">
    <property type="term" value="F:metal ion binding"/>
    <property type="evidence" value="ECO:0007669"/>
    <property type="project" value="UniProtKB-KW"/>
</dbReference>
<dbReference type="GO" id="GO:0044210">
    <property type="term" value="P:'de novo' CTP biosynthetic process"/>
    <property type="evidence" value="ECO:0007669"/>
    <property type="project" value="UniProtKB-UniRule"/>
</dbReference>
<dbReference type="GO" id="GO:0019856">
    <property type="term" value="P:pyrimidine nucleobase biosynthetic process"/>
    <property type="evidence" value="ECO:0007669"/>
    <property type="project" value="TreeGrafter"/>
</dbReference>
<dbReference type="CDD" id="cd03113">
    <property type="entry name" value="CTPS_N"/>
    <property type="match status" value="1"/>
</dbReference>
<dbReference type="CDD" id="cd01746">
    <property type="entry name" value="GATase1_CTP_Synthase"/>
    <property type="match status" value="1"/>
</dbReference>
<dbReference type="FunFam" id="3.40.50.300:FF:000009">
    <property type="entry name" value="CTP synthase"/>
    <property type="match status" value="1"/>
</dbReference>
<dbReference type="FunFam" id="3.40.50.880:FF:000002">
    <property type="entry name" value="CTP synthase"/>
    <property type="match status" value="1"/>
</dbReference>
<dbReference type="Gene3D" id="3.40.50.880">
    <property type="match status" value="1"/>
</dbReference>
<dbReference type="Gene3D" id="3.40.50.300">
    <property type="entry name" value="P-loop containing nucleotide triphosphate hydrolases"/>
    <property type="match status" value="1"/>
</dbReference>
<dbReference type="HAMAP" id="MF_01227">
    <property type="entry name" value="PyrG"/>
    <property type="match status" value="1"/>
</dbReference>
<dbReference type="InterPro" id="IPR029062">
    <property type="entry name" value="Class_I_gatase-like"/>
</dbReference>
<dbReference type="InterPro" id="IPR004468">
    <property type="entry name" value="CTP_synthase"/>
</dbReference>
<dbReference type="InterPro" id="IPR017456">
    <property type="entry name" value="CTP_synthase_N"/>
</dbReference>
<dbReference type="InterPro" id="IPR017926">
    <property type="entry name" value="GATASE"/>
</dbReference>
<dbReference type="InterPro" id="IPR033828">
    <property type="entry name" value="GATase1_CTP_Synthase"/>
</dbReference>
<dbReference type="InterPro" id="IPR027417">
    <property type="entry name" value="P-loop_NTPase"/>
</dbReference>
<dbReference type="NCBIfam" id="NF003792">
    <property type="entry name" value="PRK05380.1"/>
    <property type="match status" value="1"/>
</dbReference>
<dbReference type="NCBIfam" id="TIGR00337">
    <property type="entry name" value="PyrG"/>
    <property type="match status" value="1"/>
</dbReference>
<dbReference type="PANTHER" id="PTHR11550">
    <property type="entry name" value="CTP SYNTHASE"/>
    <property type="match status" value="1"/>
</dbReference>
<dbReference type="PANTHER" id="PTHR11550:SF0">
    <property type="entry name" value="CTP SYNTHASE-RELATED"/>
    <property type="match status" value="1"/>
</dbReference>
<dbReference type="Pfam" id="PF06418">
    <property type="entry name" value="CTP_synth_N"/>
    <property type="match status" value="1"/>
</dbReference>
<dbReference type="Pfam" id="PF00117">
    <property type="entry name" value="GATase"/>
    <property type="match status" value="1"/>
</dbReference>
<dbReference type="SUPFAM" id="SSF52317">
    <property type="entry name" value="Class I glutamine amidotransferase-like"/>
    <property type="match status" value="1"/>
</dbReference>
<dbReference type="SUPFAM" id="SSF52540">
    <property type="entry name" value="P-loop containing nucleoside triphosphate hydrolases"/>
    <property type="match status" value="1"/>
</dbReference>
<dbReference type="PROSITE" id="PS51273">
    <property type="entry name" value="GATASE_TYPE_1"/>
    <property type="match status" value="1"/>
</dbReference>
<organism>
    <name type="scientific">Campylobacter jejuni subsp. jejuni serotype O:6 (strain 81116 / NCTC 11828)</name>
    <dbReference type="NCBI Taxonomy" id="407148"/>
    <lineage>
        <taxon>Bacteria</taxon>
        <taxon>Pseudomonadati</taxon>
        <taxon>Campylobacterota</taxon>
        <taxon>Epsilonproteobacteria</taxon>
        <taxon>Campylobacterales</taxon>
        <taxon>Campylobacteraceae</taxon>
        <taxon>Campylobacter</taxon>
    </lineage>
</organism>
<sequence length="543" mass="60302">MKQTKYIFVTGGVLSSLGKGIAAASIATLLKNSGLKVSILKADPYINVDPGTMSPFEHGEVFVTDDGAETDLDLGHYERFLDESLSQDNNFTTGRVYQSVIEKERRGEYLGKTIQVIPHIVGEIKDRIKKAGEGKDILIVEIGGTVGDIEGLPFLEAIRALRLEVGKNNAMNIHLTLVPFIKAAGELKTKPTQHSVGELRRIGISPDMIICRSEKALDRDLKDKIAISCGVEKNCVIESVDAASIYQIPLNFLKQDILSPIAEILDLKNLKPNMENWDSLVKRVIAPSNEVKIAFVGKYVDLKESYKSLTEAIIHAGAALDTKVELKWVDSEKLENMESAEVFKDVSGILVAGGFGYRGVEGKIKAIQYARENKIPFLGICLGMQLALVEFARNVLKLKDANSSEFDEKCQNPVVYLIDEFMDTNGEKQIRTAKTPLGGTMRLGAYKCDIKEKSLLAKVYNEAKSVKERHRHRYEANPKYRVDFEKHGLIVSGESKGLIEAVELNCHPFFLAVQFHPEFTSRLEHVNPVICGFIKAAINYEDN</sequence>
<accession>A8FJJ0</accession>
<name>PYRG_CAMJ8</name>
<gene>
    <name evidence="1" type="primary">pyrG</name>
    <name type="ordered locus">C8J_0026</name>
</gene>
<protein>
    <recommendedName>
        <fullName evidence="1">CTP synthase</fullName>
        <ecNumber evidence="1">6.3.4.2</ecNumber>
    </recommendedName>
    <alternativeName>
        <fullName evidence="1">Cytidine 5'-triphosphate synthase</fullName>
    </alternativeName>
    <alternativeName>
        <fullName evidence="1">Cytidine triphosphate synthetase</fullName>
        <shortName evidence="1">CTP synthetase</shortName>
        <shortName evidence="1">CTPS</shortName>
    </alternativeName>
    <alternativeName>
        <fullName evidence="1">UTP--ammonia ligase</fullName>
    </alternativeName>
</protein>
<proteinExistence type="inferred from homology"/>
<evidence type="ECO:0000255" key="1">
    <source>
        <dbReference type="HAMAP-Rule" id="MF_01227"/>
    </source>
</evidence>
<feature type="chain" id="PRO_1000139409" description="CTP synthase">
    <location>
        <begin position="1"/>
        <end position="543"/>
    </location>
</feature>
<feature type="domain" description="Glutamine amidotransferase type-1" evidence="1">
    <location>
        <begin position="292"/>
        <end position="543"/>
    </location>
</feature>
<feature type="region of interest" description="Amidoligase domain" evidence="1">
    <location>
        <begin position="1"/>
        <end position="267"/>
    </location>
</feature>
<feature type="active site" description="Nucleophile; for glutamine hydrolysis" evidence="1">
    <location>
        <position position="381"/>
    </location>
</feature>
<feature type="active site" evidence="1">
    <location>
        <position position="516"/>
    </location>
</feature>
<feature type="active site" evidence="1">
    <location>
        <position position="518"/>
    </location>
</feature>
<feature type="binding site" evidence="1">
    <location>
        <position position="15"/>
    </location>
    <ligand>
        <name>CTP</name>
        <dbReference type="ChEBI" id="CHEBI:37563"/>
        <note>allosteric inhibitor</note>
    </ligand>
</feature>
<feature type="binding site" evidence="1">
    <location>
        <position position="15"/>
    </location>
    <ligand>
        <name>UTP</name>
        <dbReference type="ChEBI" id="CHEBI:46398"/>
    </ligand>
</feature>
<feature type="binding site" evidence="1">
    <location>
        <begin position="16"/>
        <end position="21"/>
    </location>
    <ligand>
        <name>ATP</name>
        <dbReference type="ChEBI" id="CHEBI:30616"/>
    </ligand>
</feature>
<feature type="binding site" evidence="1">
    <location>
        <position position="73"/>
    </location>
    <ligand>
        <name>ATP</name>
        <dbReference type="ChEBI" id="CHEBI:30616"/>
    </ligand>
</feature>
<feature type="binding site" evidence="1">
    <location>
        <position position="73"/>
    </location>
    <ligand>
        <name>Mg(2+)</name>
        <dbReference type="ChEBI" id="CHEBI:18420"/>
    </ligand>
</feature>
<feature type="binding site" evidence="1">
    <location>
        <position position="141"/>
    </location>
    <ligand>
        <name>Mg(2+)</name>
        <dbReference type="ChEBI" id="CHEBI:18420"/>
    </ligand>
</feature>
<feature type="binding site" evidence="1">
    <location>
        <begin position="148"/>
        <end position="150"/>
    </location>
    <ligand>
        <name>CTP</name>
        <dbReference type="ChEBI" id="CHEBI:37563"/>
        <note>allosteric inhibitor</note>
    </ligand>
</feature>
<feature type="binding site" evidence="1">
    <location>
        <begin position="188"/>
        <end position="193"/>
    </location>
    <ligand>
        <name>CTP</name>
        <dbReference type="ChEBI" id="CHEBI:37563"/>
        <note>allosteric inhibitor</note>
    </ligand>
</feature>
<feature type="binding site" evidence="1">
    <location>
        <begin position="188"/>
        <end position="193"/>
    </location>
    <ligand>
        <name>UTP</name>
        <dbReference type="ChEBI" id="CHEBI:46398"/>
    </ligand>
</feature>
<feature type="binding site" evidence="1">
    <location>
        <position position="224"/>
    </location>
    <ligand>
        <name>CTP</name>
        <dbReference type="ChEBI" id="CHEBI:37563"/>
        <note>allosteric inhibitor</note>
    </ligand>
</feature>
<feature type="binding site" evidence="1">
    <location>
        <position position="224"/>
    </location>
    <ligand>
        <name>UTP</name>
        <dbReference type="ChEBI" id="CHEBI:46398"/>
    </ligand>
</feature>
<feature type="binding site" evidence="1">
    <location>
        <position position="354"/>
    </location>
    <ligand>
        <name>L-glutamine</name>
        <dbReference type="ChEBI" id="CHEBI:58359"/>
    </ligand>
</feature>
<feature type="binding site" evidence="1">
    <location>
        <begin position="382"/>
        <end position="385"/>
    </location>
    <ligand>
        <name>L-glutamine</name>
        <dbReference type="ChEBI" id="CHEBI:58359"/>
    </ligand>
</feature>
<feature type="binding site" evidence="1">
    <location>
        <position position="405"/>
    </location>
    <ligand>
        <name>L-glutamine</name>
        <dbReference type="ChEBI" id="CHEBI:58359"/>
    </ligand>
</feature>
<feature type="binding site" evidence="1">
    <location>
        <position position="473"/>
    </location>
    <ligand>
        <name>L-glutamine</name>
        <dbReference type="ChEBI" id="CHEBI:58359"/>
    </ligand>
</feature>
<keyword id="KW-0067">ATP-binding</keyword>
<keyword id="KW-0315">Glutamine amidotransferase</keyword>
<keyword id="KW-0436">Ligase</keyword>
<keyword id="KW-0460">Magnesium</keyword>
<keyword id="KW-0479">Metal-binding</keyword>
<keyword id="KW-0547">Nucleotide-binding</keyword>
<keyword id="KW-0665">Pyrimidine biosynthesis</keyword>
<comment type="function">
    <text evidence="1">Catalyzes the ATP-dependent amination of UTP to CTP with either L-glutamine or ammonia as the source of nitrogen. Regulates intracellular CTP levels through interactions with the four ribonucleotide triphosphates.</text>
</comment>
<comment type="catalytic activity">
    <reaction evidence="1">
        <text>UTP + L-glutamine + ATP + H2O = CTP + L-glutamate + ADP + phosphate + 2 H(+)</text>
        <dbReference type="Rhea" id="RHEA:26426"/>
        <dbReference type="ChEBI" id="CHEBI:15377"/>
        <dbReference type="ChEBI" id="CHEBI:15378"/>
        <dbReference type="ChEBI" id="CHEBI:29985"/>
        <dbReference type="ChEBI" id="CHEBI:30616"/>
        <dbReference type="ChEBI" id="CHEBI:37563"/>
        <dbReference type="ChEBI" id="CHEBI:43474"/>
        <dbReference type="ChEBI" id="CHEBI:46398"/>
        <dbReference type="ChEBI" id="CHEBI:58359"/>
        <dbReference type="ChEBI" id="CHEBI:456216"/>
        <dbReference type="EC" id="6.3.4.2"/>
    </reaction>
</comment>
<comment type="catalytic activity">
    <reaction evidence="1">
        <text>L-glutamine + H2O = L-glutamate + NH4(+)</text>
        <dbReference type="Rhea" id="RHEA:15889"/>
        <dbReference type="ChEBI" id="CHEBI:15377"/>
        <dbReference type="ChEBI" id="CHEBI:28938"/>
        <dbReference type="ChEBI" id="CHEBI:29985"/>
        <dbReference type="ChEBI" id="CHEBI:58359"/>
    </reaction>
</comment>
<comment type="catalytic activity">
    <reaction evidence="1">
        <text>UTP + NH4(+) + ATP = CTP + ADP + phosphate + 2 H(+)</text>
        <dbReference type="Rhea" id="RHEA:16597"/>
        <dbReference type="ChEBI" id="CHEBI:15378"/>
        <dbReference type="ChEBI" id="CHEBI:28938"/>
        <dbReference type="ChEBI" id="CHEBI:30616"/>
        <dbReference type="ChEBI" id="CHEBI:37563"/>
        <dbReference type="ChEBI" id="CHEBI:43474"/>
        <dbReference type="ChEBI" id="CHEBI:46398"/>
        <dbReference type="ChEBI" id="CHEBI:456216"/>
    </reaction>
</comment>
<comment type="activity regulation">
    <text evidence="1">Allosterically activated by GTP, when glutamine is the substrate; GTP has no effect on the reaction when ammonia is the substrate. The allosteric effector GTP functions by stabilizing the protein conformation that binds the tetrahedral intermediate(s) formed during glutamine hydrolysis. Inhibited by the product CTP, via allosteric rather than competitive inhibition.</text>
</comment>
<comment type="pathway">
    <text evidence="1">Pyrimidine metabolism; CTP biosynthesis via de novo pathway; CTP from UDP: step 2/2.</text>
</comment>
<comment type="subunit">
    <text evidence="1">Homotetramer.</text>
</comment>
<comment type="miscellaneous">
    <text evidence="1">CTPSs have evolved a hybrid strategy for distinguishing between UTP and CTP. The overlapping regions of the product feedback inhibitory and substrate sites recognize a common feature in both compounds, the triphosphate moiety. To differentiate isosteric substrate and product pyrimidine rings, an additional pocket far from the expected kinase/ligase catalytic site, specifically recognizes the cytosine and ribose portions of the product inhibitor.</text>
</comment>
<comment type="similarity">
    <text evidence="1">Belongs to the CTP synthase family.</text>
</comment>
<reference key="1">
    <citation type="journal article" date="2007" name="J. Bacteriol.">
        <title>The complete genome sequence of Campylobacter jejuni strain 81116 (NCTC11828).</title>
        <authorList>
            <person name="Pearson B.M."/>
            <person name="Gaskin D.J.H."/>
            <person name="Segers R.P.A.M."/>
            <person name="Wells J.M."/>
            <person name="Nuijten P.J.M."/>
            <person name="van Vliet A.H.M."/>
        </authorList>
    </citation>
    <scope>NUCLEOTIDE SEQUENCE [LARGE SCALE GENOMIC DNA]</scope>
    <source>
        <strain>81116 / NCTC 11828</strain>
    </source>
</reference>